<reference key="1">
    <citation type="submission" date="2009-11" db="EMBL/GenBank/DDBJ databases">
        <authorList>
            <consortium name="Porcine genome sequencing project"/>
        </authorList>
    </citation>
    <scope>NUCLEOTIDE SEQUENCE [LARGE SCALE GENOMIC DNA]</scope>
    <source>
        <strain>Duroc</strain>
    </source>
</reference>
<reference key="2">
    <citation type="journal article" date="1998" name="Vet. Immunol. Immunopathol.">
        <title>Inducible nitric oxide synthase expression in porcine immune cells.</title>
        <authorList>
            <person name="Pampusch M.S."/>
            <person name="Bennaars A.M."/>
            <person name="Harsch S."/>
            <person name="Murtaugh M.P."/>
        </authorList>
    </citation>
    <scope>NUCLEOTIDE SEQUENCE [MRNA]</scope>
    <source>
        <tissue>Spleen</tissue>
    </source>
</reference>
<accession>P79290</accession>
<accession>A0A287AUH8</accession>
<accession>A0A287BRU8</accession>
<feature type="chain" id="PRO_0000170935" description="Nitric oxide synthase, inducible">
    <location>
        <begin position="1"/>
        <end position="1157"/>
    </location>
</feature>
<feature type="domain" description="Flavodoxin-like" evidence="6">
    <location>
        <begin position="539"/>
        <end position="677"/>
    </location>
</feature>
<feature type="domain" description="FAD-binding FR-type" evidence="7">
    <location>
        <begin position="730"/>
        <end position="970"/>
    </location>
</feature>
<feature type="region of interest" description="Disordered" evidence="8">
    <location>
        <begin position="29"/>
        <end position="64"/>
    </location>
</feature>
<feature type="region of interest" description="Calmodulin-binding" evidence="5">
    <location>
        <begin position="515"/>
        <end position="535"/>
    </location>
</feature>
<feature type="region of interest" description="Disordered" evidence="8">
    <location>
        <begin position="1138"/>
        <end position="1157"/>
    </location>
</feature>
<feature type="short sequence motif" description="DINNN-motif; mediates interaction with SPSB1, SPSB2 and SPSB4" evidence="5">
    <location>
        <begin position="23"/>
        <end position="27"/>
    </location>
</feature>
<feature type="binding site" evidence="5">
    <location>
        <position position="110"/>
    </location>
    <ligand>
        <name>Zn(2+)</name>
        <dbReference type="ChEBI" id="CHEBI:29105"/>
        <note>ligand shared between homodimeric partners</note>
    </ligand>
</feature>
<feature type="binding site" evidence="5">
    <location>
        <position position="115"/>
    </location>
    <ligand>
        <name>Zn(2+)</name>
        <dbReference type="ChEBI" id="CHEBI:29105"/>
        <note>ligand shared between homodimeric partners</note>
    </ligand>
</feature>
<feature type="binding site" description="axial binding residue" evidence="5">
    <location>
        <position position="200"/>
    </location>
    <ligand>
        <name>heme b</name>
        <dbReference type="ChEBI" id="CHEBI:60344"/>
    </ligand>
    <ligandPart>
        <name>Fe</name>
        <dbReference type="ChEBI" id="CHEBI:18248"/>
    </ligandPart>
</feature>
<feature type="binding site" evidence="2">
    <location>
        <position position="263"/>
    </location>
    <ligand>
        <name>L-arginine</name>
        <dbReference type="ChEBI" id="CHEBI:32682"/>
    </ligand>
</feature>
<feature type="binding site" evidence="2">
    <location>
        <position position="372"/>
    </location>
    <ligand>
        <name>L-arginine</name>
        <dbReference type="ChEBI" id="CHEBI:32682"/>
    </ligand>
</feature>
<feature type="binding site" evidence="2">
    <location>
        <position position="373"/>
    </location>
    <ligand>
        <name>L-arginine</name>
        <dbReference type="ChEBI" id="CHEBI:32682"/>
    </ligand>
</feature>
<feature type="binding site" evidence="2">
    <location>
        <position position="377"/>
    </location>
    <ligand>
        <name>L-arginine</name>
        <dbReference type="ChEBI" id="CHEBI:32682"/>
    </ligand>
</feature>
<feature type="binding site" evidence="5">
    <location>
        <position position="381"/>
    </location>
    <ligand>
        <name>(6R)-L-erythro-5,6,7,8-tetrahydrobiopterin</name>
        <dbReference type="ChEBI" id="CHEBI:59560"/>
    </ligand>
</feature>
<feature type="binding site" evidence="5">
    <location>
        <position position="462"/>
    </location>
    <ligand>
        <name>(6R)-L-erythro-5,6,7,8-tetrahydrobiopterin</name>
        <dbReference type="ChEBI" id="CHEBI:59560"/>
    </ligand>
</feature>
<feature type="binding site" evidence="5">
    <location>
        <position position="463"/>
    </location>
    <ligand>
        <name>(6R)-L-erythro-5,6,7,8-tetrahydrobiopterin</name>
        <dbReference type="ChEBI" id="CHEBI:59560"/>
    </ligand>
</feature>
<feature type="binding site" evidence="5">
    <location>
        <position position="476"/>
    </location>
    <ligand>
        <name>(6R)-L-erythro-5,6,7,8-tetrahydrobiopterin</name>
        <dbReference type="ChEBI" id="CHEBI:59560"/>
    </ligand>
</feature>
<feature type="binding site" evidence="5">
    <location>
        <position position="491"/>
    </location>
    <ligand>
        <name>heme b</name>
        <dbReference type="ChEBI" id="CHEBI:60344"/>
    </ligand>
</feature>
<feature type="binding site" evidence="5">
    <location>
        <position position="545"/>
    </location>
    <ligand>
        <name>FMN</name>
        <dbReference type="ChEBI" id="CHEBI:58210"/>
    </ligand>
</feature>
<feature type="binding site" evidence="5">
    <location>
        <position position="546"/>
    </location>
    <ligand>
        <name>FMN</name>
        <dbReference type="ChEBI" id="CHEBI:58210"/>
    </ligand>
</feature>
<feature type="binding site" evidence="5">
    <location>
        <position position="547"/>
    </location>
    <ligand>
        <name>FMN</name>
        <dbReference type="ChEBI" id="CHEBI:58210"/>
    </ligand>
</feature>
<feature type="binding site" evidence="5">
    <location>
        <position position="549"/>
    </location>
    <ligand>
        <name>FMN</name>
        <dbReference type="ChEBI" id="CHEBI:58210"/>
    </ligand>
</feature>
<feature type="binding site" evidence="5">
    <location>
        <position position="550"/>
    </location>
    <ligand>
        <name>FMN</name>
        <dbReference type="ChEBI" id="CHEBI:58210"/>
    </ligand>
</feature>
<feature type="binding site" evidence="5">
    <location>
        <position position="591"/>
    </location>
    <ligand>
        <name>FMN</name>
        <dbReference type="ChEBI" id="CHEBI:58210"/>
    </ligand>
</feature>
<feature type="binding site" evidence="5">
    <location>
        <position position="592"/>
    </location>
    <ligand>
        <name>FMN</name>
        <dbReference type="ChEBI" id="CHEBI:58210"/>
    </ligand>
</feature>
<feature type="binding site" evidence="5">
    <location>
        <position position="628"/>
    </location>
    <ligand>
        <name>FMN</name>
        <dbReference type="ChEBI" id="CHEBI:58210"/>
    </ligand>
</feature>
<feature type="binding site" evidence="5">
    <location>
        <position position="635"/>
    </location>
    <ligand>
        <name>FMN</name>
        <dbReference type="ChEBI" id="CHEBI:58210"/>
    </ligand>
</feature>
<feature type="binding site" evidence="5">
    <location>
        <position position="661"/>
    </location>
    <ligand>
        <name>FMN</name>
        <dbReference type="ChEBI" id="CHEBI:58210"/>
    </ligand>
</feature>
<feature type="binding site" evidence="5">
    <location>
        <position position="665"/>
    </location>
    <ligand>
        <name>FMN</name>
        <dbReference type="ChEBI" id="CHEBI:58210"/>
    </ligand>
</feature>
<feature type="binding site" evidence="3">
    <location>
        <position position="750"/>
    </location>
    <ligand>
        <name>NADP(+)</name>
        <dbReference type="ChEBI" id="CHEBI:58349"/>
    </ligand>
</feature>
<feature type="binding site" evidence="3">
    <location>
        <position position="772"/>
    </location>
    <ligand>
        <name>FAD</name>
        <dbReference type="ChEBI" id="CHEBI:57692"/>
    </ligand>
</feature>
<feature type="binding site" evidence="3">
    <location>
        <position position="906"/>
    </location>
    <ligand>
        <name>FAD</name>
        <dbReference type="ChEBI" id="CHEBI:57692"/>
    </ligand>
</feature>
<feature type="binding site" evidence="3">
    <location>
        <position position="908"/>
    </location>
    <ligand>
        <name>FAD</name>
        <dbReference type="ChEBI" id="CHEBI:57692"/>
    </ligand>
</feature>
<feature type="binding site" evidence="3">
    <location>
        <position position="909"/>
    </location>
    <ligand>
        <name>FAD</name>
        <dbReference type="ChEBI" id="CHEBI:57692"/>
    </ligand>
</feature>
<feature type="binding site" evidence="3">
    <location>
        <position position="924"/>
    </location>
    <ligand>
        <name>FAD</name>
        <dbReference type="ChEBI" id="CHEBI:57692"/>
    </ligand>
</feature>
<feature type="binding site" evidence="3">
    <location>
        <position position="926"/>
    </location>
    <ligand>
        <name>FAD</name>
        <dbReference type="ChEBI" id="CHEBI:57692"/>
    </ligand>
</feature>
<feature type="binding site" evidence="3">
    <location>
        <position position="929"/>
    </location>
    <ligand>
        <name>NADP(+)</name>
        <dbReference type="ChEBI" id="CHEBI:58349"/>
    </ligand>
</feature>
<feature type="binding site" evidence="3">
    <location>
        <position position="930"/>
    </location>
    <ligand>
        <name>FAD</name>
        <dbReference type="ChEBI" id="CHEBI:57692"/>
    </ligand>
</feature>
<feature type="binding site" evidence="3">
    <location>
        <position position="943"/>
    </location>
    <ligand>
        <name>FAD</name>
        <dbReference type="ChEBI" id="CHEBI:57692"/>
    </ligand>
</feature>
<feature type="binding site" evidence="3">
    <location>
        <position position="944"/>
    </location>
    <ligand>
        <name>FAD</name>
        <dbReference type="ChEBI" id="CHEBI:57692"/>
    </ligand>
</feature>
<feature type="binding site" evidence="3">
    <location>
        <position position="945"/>
    </location>
    <ligand>
        <name>FAD</name>
        <dbReference type="ChEBI" id="CHEBI:57692"/>
    </ligand>
</feature>
<feature type="binding site" evidence="3">
    <location>
        <position position="984"/>
    </location>
    <ligand>
        <name>NADP(+)</name>
        <dbReference type="ChEBI" id="CHEBI:58349"/>
    </ligand>
</feature>
<feature type="binding site" evidence="3">
    <location>
        <position position="1017"/>
    </location>
    <ligand>
        <name>NADP(+)</name>
        <dbReference type="ChEBI" id="CHEBI:58349"/>
    </ligand>
</feature>
<feature type="binding site" evidence="3">
    <location>
        <position position="1046"/>
    </location>
    <ligand>
        <name>NADP(+)</name>
        <dbReference type="ChEBI" id="CHEBI:58349"/>
    </ligand>
</feature>
<feature type="binding site" evidence="3">
    <location>
        <position position="1047"/>
    </location>
    <ligand>
        <name>NADP(+)</name>
        <dbReference type="ChEBI" id="CHEBI:58349"/>
    </ligand>
</feature>
<feature type="binding site" evidence="3">
    <location>
        <position position="1053"/>
    </location>
    <ligand>
        <name>NADP(+)</name>
        <dbReference type="ChEBI" id="CHEBI:58349"/>
    </ligand>
</feature>
<feature type="binding site" evidence="3">
    <location>
        <position position="1055"/>
    </location>
    <ligand>
        <name>NADP(+)</name>
        <dbReference type="ChEBI" id="CHEBI:58349"/>
    </ligand>
</feature>
<feature type="binding site" evidence="3">
    <location>
        <position position="1057"/>
    </location>
    <ligand>
        <name>NADP(+)</name>
        <dbReference type="ChEBI" id="CHEBI:58349"/>
    </ligand>
</feature>
<feature type="binding site" evidence="3">
    <location>
        <position position="1090"/>
    </location>
    <ligand>
        <name>NADP(+)</name>
        <dbReference type="ChEBI" id="CHEBI:58349"/>
    </ligand>
</feature>
<gene>
    <name type="primary">NOS2</name>
</gene>
<keyword id="KW-0112">Calmodulin-binding</keyword>
<keyword id="KW-0963">Cytoplasm</keyword>
<keyword id="KW-0274">FAD</keyword>
<keyword id="KW-0285">Flavoprotein</keyword>
<keyword id="KW-0288">FMN</keyword>
<keyword id="KW-0349">Heme</keyword>
<keyword id="KW-0408">Iron</keyword>
<keyword id="KW-0479">Metal-binding</keyword>
<keyword id="KW-0521">NADP</keyword>
<keyword id="KW-0560">Oxidoreductase</keyword>
<keyword id="KW-1185">Reference proteome</keyword>
<keyword id="KW-0832">Ubl conjugation</keyword>
<keyword id="KW-0862">Zinc</keyword>
<dbReference type="EC" id="1.14.13.39" evidence="5"/>
<dbReference type="EMBL" id="DQIR01039684">
    <property type="protein sequence ID" value="HCZ95159.1"/>
    <property type="molecule type" value="Transcribed_RNA"/>
</dbReference>
<dbReference type="EMBL" id="DQIR01166906">
    <property type="protein sequence ID" value="HDB22383.1"/>
    <property type="molecule type" value="Transcribed_RNA"/>
</dbReference>
<dbReference type="EMBL" id="DQIR01261531">
    <property type="protein sequence ID" value="HDC17009.1"/>
    <property type="molecule type" value="Transcribed_RNA"/>
</dbReference>
<dbReference type="EMBL" id="U59390">
    <property type="protein sequence ID" value="AAB40614.1"/>
    <property type="molecule type" value="mRNA"/>
</dbReference>
<dbReference type="RefSeq" id="XP_005669136.1">
    <property type="nucleotide sequence ID" value="XM_005669079.3"/>
</dbReference>
<dbReference type="RefSeq" id="XP_013836620.1">
    <property type="nucleotide sequence ID" value="XM_013981166.2"/>
</dbReference>
<dbReference type="RefSeq" id="XP_013836621.1">
    <property type="nucleotide sequence ID" value="XM_013981167.1"/>
</dbReference>
<dbReference type="RefSeq" id="XP_013836622.1">
    <property type="nucleotide sequence ID" value="XM_013981168.1"/>
</dbReference>
<dbReference type="RefSeq" id="XP_020921845.1">
    <property type="nucleotide sequence ID" value="XM_021066186.1"/>
</dbReference>
<dbReference type="SMR" id="P79290"/>
<dbReference type="STRING" id="9823.ENSSSCP00000058904"/>
<dbReference type="PaxDb" id="9823-ENSSSCP00000018812"/>
<dbReference type="Ensembl" id="ENSSSCT00000055475.3">
    <property type="protein sequence ID" value="ENSSSCP00000058904.2"/>
    <property type="gene ID" value="ENSSSCG00000017755.5"/>
</dbReference>
<dbReference type="Ensembl" id="ENSSSCT00085034935">
    <property type="protein sequence ID" value="ENSSSCP00085023895"/>
    <property type="gene ID" value="ENSSSCG00085018463"/>
</dbReference>
<dbReference type="Ensembl" id="ENSSSCT00090021873">
    <property type="protein sequence ID" value="ENSSSCP00090013401"/>
    <property type="gene ID" value="ENSSSCG00090012452"/>
</dbReference>
<dbReference type="GeneID" id="396859"/>
<dbReference type="CTD" id="4843"/>
<dbReference type="VGNC" id="VGNC:99024">
    <property type="gene designation" value="NOS2"/>
</dbReference>
<dbReference type="eggNOG" id="KOG1158">
    <property type="taxonomic scope" value="Eukaryota"/>
</dbReference>
<dbReference type="GeneTree" id="ENSGT00940000159752"/>
<dbReference type="InParanoid" id="P79290"/>
<dbReference type="OMA" id="CRHIRYA"/>
<dbReference type="OrthoDB" id="1688044at2759"/>
<dbReference type="Reactome" id="R-SSC-1222556">
    <property type="pathway name" value="ROS and RNS production in phagocytes"/>
</dbReference>
<dbReference type="Reactome" id="R-SSC-392154">
    <property type="pathway name" value="Nitric oxide stimulates guanylate cyclase"/>
</dbReference>
<dbReference type="Reactome" id="R-SSC-9033241">
    <property type="pathway name" value="Peroxisomal protein import"/>
</dbReference>
<dbReference type="Proteomes" id="UP000008227">
    <property type="component" value="Chromosome 12"/>
</dbReference>
<dbReference type="Proteomes" id="UP000314985">
    <property type="component" value="Unplaced"/>
</dbReference>
<dbReference type="Proteomes" id="UP000694570">
    <property type="component" value="Unplaced"/>
</dbReference>
<dbReference type="Proteomes" id="UP000694571">
    <property type="component" value="Unplaced"/>
</dbReference>
<dbReference type="Proteomes" id="UP000694720">
    <property type="component" value="Unplaced"/>
</dbReference>
<dbReference type="Proteomes" id="UP000694722">
    <property type="component" value="Unplaced"/>
</dbReference>
<dbReference type="Proteomes" id="UP000694723">
    <property type="component" value="Unplaced"/>
</dbReference>
<dbReference type="Proteomes" id="UP000694724">
    <property type="component" value="Unplaced"/>
</dbReference>
<dbReference type="Proteomes" id="UP000694725">
    <property type="component" value="Unplaced"/>
</dbReference>
<dbReference type="Proteomes" id="UP000694726">
    <property type="component" value="Unplaced"/>
</dbReference>
<dbReference type="Proteomes" id="UP000694727">
    <property type="component" value="Unplaced"/>
</dbReference>
<dbReference type="Proteomes" id="UP000694728">
    <property type="component" value="Unplaced"/>
</dbReference>
<dbReference type="Bgee" id="ENSSSCG00000017755">
    <property type="expression patterns" value="Expressed in caecum and 31 other cell types or tissues"/>
</dbReference>
<dbReference type="GO" id="GO:0030863">
    <property type="term" value="C:cortical cytoskeleton"/>
    <property type="evidence" value="ECO:0007669"/>
    <property type="project" value="Ensembl"/>
</dbReference>
<dbReference type="GO" id="GO:0005829">
    <property type="term" value="C:cytosol"/>
    <property type="evidence" value="ECO:0000318"/>
    <property type="project" value="GO_Central"/>
</dbReference>
<dbReference type="GO" id="GO:0005634">
    <property type="term" value="C:nucleus"/>
    <property type="evidence" value="ECO:0000318"/>
    <property type="project" value="GO_Central"/>
</dbReference>
<dbReference type="GO" id="GO:0048471">
    <property type="term" value="C:perinuclear region of cytoplasm"/>
    <property type="evidence" value="ECO:0007669"/>
    <property type="project" value="Ensembl"/>
</dbReference>
<dbReference type="GO" id="GO:0005777">
    <property type="term" value="C:peroxisome"/>
    <property type="evidence" value="ECO:0007669"/>
    <property type="project" value="Ensembl"/>
</dbReference>
<dbReference type="GO" id="GO:0005886">
    <property type="term" value="C:plasma membrane"/>
    <property type="evidence" value="ECO:0000318"/>
    <property type="project" value="GO_Central"/>
</dbReference>
<dbReference type="GO" id="GO:0034618">
    <property type="term" value="F:arginine binding"/>
    <property type="evidence" value="ECO:0007669"/>
    <property type="project" value="Ensembl"/>
</dbReference>
<dbReference type="GO" id="GO:0005516">
    <property type="term" value="F:calmodulin binding"/>
    <property type="evidence" value="ECO:0007669"/>
    <property type="project" value="UniProtKB-KW"/>
</dbReference>
<dbReference type="GO" id="GO:0050660">
    <property type="term" value="F:flavin adenine dinucleotide binding"/>
    <property type="evidence" value="ECO:0000318"/>
    <property type="project" value="GO_Central"/>
</dbReference>
<dbReference type="GO" id="GO:0010181">
    <property type="term" value="F:FMN binding"/>
    <property type="evidence" value="ECO:0000318"/>
    <property type="project" value="GO_Central"/>
</dbReference>
<dbReference type="GO" id="GO:0020037">
    <property type="term" value="F:heme binding"/>
    <property type="evidence" value="ECO:0007669"/>
    <property type="project" value="Ensembl"/>
</dbReference>
<dbReference type="GO" id="GO:0046872">
    <property type="term" value="F:metal ion binding"/>
    <property type="evidence" value="ECO:0007669"/>
    <property type="project" value="UniProtKB-KW"/>
</dbReference>
<dbReference type="GO" id="GO:0050661">
    <property type="term" value="F:NADP binding"/>
    <property type="evidence" value="ECO:0007669"/>
    <property type="project" value="InterPro"/>
</dbReference>
<dbReference type="GO" id="GO:0004517">
    <property type="term" value="F:nitric-oxide synthase activity"/>
    <property type="evidence" value="ECO:0000250"/>
    <property type="project" value="UniProtKB"/>
</dbReference>
<dbReference type="GO" id="GO:0042803">
    <property type="term" value="F:protein homodimerization activity"/>
    <property type="evidence" value="ECO:0007669"/>
    <property type="project" value="Ensembl"/>
</dbReference>
<dbReference type="GO" id="GO:0034617">
    <property type="term" value="F:tetrahydrobiopterin binding"/>
    <property type="evidence" value="ECO:0007669"/>
    <property type="project" value="Ensembl"/>
</dbReference>
<dbReference type="GO" id="GO:0006527">
    <property type="term" value="P:arginine catabolic process"/>
    <property type="evidence" value="ECO:0000318"/>
    <property type="project" value="GO_Central"/>
</dbReference>
<dbReference type="GO" id="GO:0071222">
    <property type="term" value="P:cellular response to lipopolysaccharide"/>
    <property type="evidence" value="ECO:0007669"/>
    <property type="project" value="Ensembl"/>
</dbReference>
<dbReference type="GO" id="GO:0071346">
    <property type="term" value="P:cellular response to type II interferon"/>
    <property type="evidence" value="ECO:0007669"/>
    <property type="project" value="Ensembl"/>
</dbReference>
<dbReference type="GO" id="GO:0071466">
    <property type="term" value="P:cellular response to xenobiotic stimulus"/>
    <property type="evidence" value="ECO:0007669"/>
    <property type="project" value="Ensembl"/>
</dbReference>
<dbReference type="GO" id="GO:0007623">
    <property type="term" value="P:circadian rhythm"/>
    <property type="evidence" value="ECO:0007669"/>
    <property type="project" value="Ensembl"/>
</dbReference>
<dbReference type="GO" id="GO:0042742">
    <property type="term" value="P:defense response to bacterium"/>
    <property type="evidence" value="ECO:0000318"/>
    <property type="project" value="GO_Central"/>
</dbReference>
<dbReference type="GO" id="GO:0038096">
    <property type="term" value="P:Fc-gamma receptor signaling pathway involved in phagocytosis"/>
    <property type="evidence" value="ECO:0007669"/>
    <property type="project" value="Ensembl"/>
</dbReference>
<dbReference type="GO" id="GO:0006954">
    <property type="term" value="P:inflammatory response"/>
    <property type="evidence" value="ECO:0000318"/>
    <property type="project" value="GO_Central"/>
</dbReference>
<dbReference type="GO" id="GO:0045776">
    <property type="term" value="P:negative regulation of blood pressure"/>
    <property type="evidence" value="ECO:0000318"/>
    <property type="project" value="GO_Central"/>
</dbReference>
<dbReference type="GO" id="GO:0010629">
    <property type="term" value="P:negative regulation of gene expression"/>
    <property type="evidence" value="ECO:0007669"/>
    <property type="project" value="Ensembl"/>
</dbReference>
<dbReference type="GO" id="GO:0042177">
    <property type="term" value="P:negative regulation of protein catabolic process"/>
    <property type="evidence" value="ECO:0007669"/>
    <property type="project" value="Ensembl"/>
</dbReference>
<dbReference type="GO" id="GO:0006809">
    <property type="term" value="P:nitric oxide biosynthetic process"/>
    <property type="evidence" value="ECO:0000318"/>
    <property type="project" value="GO_Central"/>
</dbReference>
<dbReference type="GO" id="GO:0007263">
    <property type="term" value="P:nitric oxide mediated signal transduction"/>
    <property type="evidence" value="ECO:0000318"/>
    <property type="project" value="GO_Central"/>
</dbReference>
<dbReference type="GO" id="GO:0018119">
    <property type="term" value="P:peptidyl-cysteine S-nitrosylation"/>
    <property type="evidence" value="ECO:0000250"/>
    <property type="project" value="UniProtKB"/>
</dbReference>
<dbReference type="GO" id="GO:0032755">
    <property type="term" value="P:positive regulation of interleukin-6 production"/>
    <property type="evidence" value="ECO:0000250"/>
    <property type="project" value="UniProtKB"/>
</dbReference>
<dbReference type="GO" id="GO:0032757">
    <property type="term" value="P:positive regulation of interleukin-8 production"/>
    <property type="evidence" value="ECO:0000250"/>
    <property type="project" value="UniProtKB"/>
</dbReference>
<dbReference type="GO" id="GO:0032310">
    <property type="term" value="P:prostaglandin secretion"/>
    <property type="evidence" value="ECO:0000250"/>
    <property type="project" value="UniProtKB"/>
</dbReference>
<dbReference type="GO" id="GO:0042127">
    <property type="term" value="P:regulation of cell population proliferation"/>
    <property type="evidence" value="ECO:0007669"/>
    <property type="project" value="Ensembl"/>
</dbReference>
<dbReference type="GO" id="GO:1900015">
    <property type="term" value="P:regulation of cytokine production involved in inflammatory response"/>
    <property type="evidence" value="ECO:0000250"/>
    <property type="project" value="UniProtKB"/>
</dbReference>
<dbReference type="GO" id="GO:0050796">
    <property type="term" value="P:regulation of insulin secretion"/>
    <property type="evidence" value="ECO:0007669"/>
    <property type="project" value="Ensembl"/>
</dbReference>
<dbReference type="GO" id="GO:0009725">
    <property type="term" value="P:response to hormone"/>
    <property type="evidence" value="ECO:0000318"/>
    <property type="project" value="GO_Central"/>
</dbReference>
<dbReference type="GO" id="GO:0001666">
    <property type="term" value="P:response to hypoxia"/>
    <property type="evidence" value="ECO:0007669"/>
    <property type="project" value="Ensembl"/>
</dbReference>
<dbReference type="GO" id="GO:0032496">
    <property type="term" value="P:response to lipopolysaccharide"/>
    <property type="evidence" value="ECO:0000318"/>
    <property type="project" value="GO_Central"/>
</dbReference>
<dbReference type="GO" id="GO:0006801">
    <property type="term" value="P:superoxide metabolic process"/>
    <property type="evidence" value="ECO:0007669"/>
    <property type="project" value="Ensembl"/>
</dbReference>
<dbReference type="CDD" id="cd00795">
    <property type="entry name" value="NOS_oxygenase_euk"/>
    <property type="match status" value="1"/>
</dbReference>
<dbReference type="FunFam" id="1.20.990.10:FF:000006">
    <property type="entry name" value="Nitric oxide synthase"/>
    <property type="match status" value="1"/>
</dbReference>
<dbReference type="FunFam" id="3.40.50.360:FF:000039">
    <property type="entry name" value="Nitric oxide synthase"/>
    <property type="match status" value="1"/>
</dbReference>
<dbReference type="FunFam" id="3.40.50.80:FF:000003">
    <property type="entry name" value="Nitric oxide synthase"/>
    <property type="match status" value="1"/>
</dbReference>
<dbReference type="FunFam" id="3.90.1230.10:FF:000001">
    <property type="entry name" value="Nitric oxide synthase, brain"/>
    <property type="match status" value="1"/>
</dbReference>
<dbReference type="FunFam" id="3.90.440.10:FF:000005">
    <property type="entry name" value="Nitric oxide synthase, inducible"/>
    <property type="match status" value="1"/>
</dbReference>
<dbReference type="Gene3D" id="3.40.50.360">
    <property type="match status" value="1"/>
</dbReference>
<dbReference type="Gene3D" id="1.20.990.10">
    <property type="entry name" value="NADPH-cytochrome p450 Reductase, Chain A, domain 3"/>
    <property type="match status" value="1"/>
</dbReference>
<dbReference type="Gene3D" id="3.90.340.10">
    <property type="entry name" value="Nitric Oxide Synthase, Chain A, domain 1"/>
    <property type="match status" value="1"/>
</dbReference>
<dbReference type="Gene3D" id="3.90.1230.10">
    <property type="entry name" value="Nitric Oxide Synthase, Chain A, domain 3"/>
    <property type="match status" value="1"/>
</dbReference>
<dbReference type="Gene3D" id="3.90.440.10">
    <property type="entry name" value="Nitric Oxide Synthase,Heme Domain,Chain A domain 2"/>
    <property type="match status" value="1"/>
</dbReference>
<dbReference type="Gene3D" id="3.40.50.80">
    <property type="entry name" value="Nucleotide-binding domain of ferredoxin-NADP reductase (FNR) module"/>
    <property type="match status" value="1"/>
</dbReference>
<dbReference type="Gene3D" id="2.40.30.10">
    <property type="entry name" value="Translation factors"/>
    <property type="match status" value="1"/>
</dbReference>
<dbReference type="InterPro" id="IPR003097">
    <property type="entry name" value="CysJ-like_FAD-binding"/>
</dbReference>
<dbReference type="InterPro" id="IPR017927">
    <property type="entry name" value="FAD-bd_FR_type"/>
</dbReference>
<dbReference type="InterPro" id="IPR001094">
    <property type="entry name" value="Flavdoxin-like"/>
</dbReference>
<dbReference type="InterPro" id="IPR008254">
    <property type="entry name" value="Flavodoxin/NO_synth"/>
</dbReference>
<dbReference type="InterPro" id="IPR001709">
    <property type="entry name" value="Flavoprot_Pyr_Nucl_cyt_Rdtase"/>
</dbReference>
<dbReference type="InterPro" id="IPR029039">
    <property type="entry name" value="Flavoprotein-like_sf"/>
</dbReference>
<dbReference type="InterPro" id="IPR039261">
    <property type="entry name" value="FNR_nucleotide-bd"/>
</dbReference>
<dbReference type="InterPro" id="IPR023173">
    <property type="entry name" value="NADPH_Cyt_P450_Rdtase_alpha"/>
</dbReference>
<dbReference type="InterPro" id="IPR050607">
    <property type="entry name" value="NOS"/>
</dbReference>
<dbReference type="InterPro" id="IPR044943">
    <property type="entry name" value="NOS_dom_1"/>
</dbReference>
<dbReference type="InterPro" id="IPR044940">
    <property type="entry name" value="NOS_dom_2"/>
</dbReference>
<dbReference type="InterPro" id="IPR044944">
    <property type="entry name" value="NOS_dom_3"/>
</dbReference>
<dbReference type="InterPro" id="IPR012144">
    <property type="entry name" value="NOS_euk"/>
</dbReference>
<dbReference type="InterPro" id="IPR004030">
    <property type="entry name" value="NOS_N"/>
</dbReference>
<dbReference type="InterPro" id="IPR036119">
    <property type="entry name" value="NOS_N_sf"/>
</dbReference>
<dbReference type="InterPro" id="IPR001433">
    <property type="entry name" value="OxRdtase_FAD/NAD-bd"/>
</dbReference>
<dbReference type="InterPro" id="IPR017938">
    <property type="entry name" value="Riboflavin_synthase-like_b-brl"/>
</dbReference>
<dbReference type="PANTHER" id="PTHR43410:SF4">
    <property type="entry name" value="NITRIC OXIDE SYNTHASE"/>
    <property type="match status" value="1"/>
</dbReference>
<dbReference type="PANTHER" id="PTHR43410">
    <property type="entry name" value="NITRIC OXIDE SYNTHASE OXYGENASE"/>
    <property type="match status" value="1"/>
</dbReference>
<dbReference type="Pfam" id="PF00667">
    <property type="entry name" value="FAD_binding_1"/>
    <property type="match status" value="1"/>
</dbReference>
<dbReference type="Pfam" id="PF00258">
    <property type="entry name" value="Flavodoxin_1"/>
    <property type="match status" value="1"/>
</dbReference>
<dbReference type="Pfam" id="PF00175">
    <property type="entry name" value="NAD_binding_1"/>
    <property type="match status" value="1"/>
</dbReference>
<dbReference type="Pfam" id="PF02898">
    <property type="entry name" value="NO_synthase"/>
    <property type="match status" value="1"/>
</dbReference>
<dbReference type="PIRSF" id="PIRSF000333">
    <property type="entry name" value="NOS"/>
    <property type="match status" value="1"/>
</dbReference>
<dbReference type="PRINTS" id="PR00369">
    <property type="entry name" value="FLAVODOXIN"/>
</dbReference>
<dbReference type="PRINTS" id="PR00371">
    <property type="entry name" value="FPNCR"/>
</dbReference>
<dbReference type="SUPFAM" id="SSF52343">
    <property type="entry name" value="Ferredoxin reductase-like, C-terminal NADP-linked domain"/>
    <property type="match status" value="1"/>
</dbReference>
<dbReference type="SUPFAM" id="SSF52218">
    <property type="entry name" value="Flavoproteins"/>
    <property type="match status" value="1"/>
</dbReference>
<dbReference type="SUPFAM" id="SSF56512">
    <property type="entry name" value="Nitric oxide (NO) synthase oxygenase domain"/>
    <property type="match status" value="1"/>
</dbReference>
<dbReference type="SUPFAM" id="SSF63380">
    <property type="entry name" value="Riboflavin synthase domain-like"/>
    <property type="match status" value="1"/>
</dbReference>
<dbReference type="PROSITE" id="PS51384">
    <property type="entry name" value="FAD_FR"/>
    <property type="match status" value="1"/>
</dbReference>
<dbReference type="PROSITE" id="PS50902">
    <property type="entry name" value="FLAVODOXIN_LIKE"/>
    <property type="match status" value="1"/>
</dbReference>
<dbReference type="PROSITE" id="PS60001">
    <property type="entry name" value="NOS"/>
    <property type="match status" value="1"/>
</dbReference>
<sequence>MACPWKFLFKAKSSRFDLTEEKDINNNLEKLRQASSSPVTQDDPKCPSRSRHRNECSQPLAETAKKSPDSLVKLDVLPPACPRHVRIKNWGSGMTFQDTLHREAKGDLACKSKSCLGAIMNPKSLTIGPRDKPTPPDELLPQAIEFVNLYYSSFKEAKIEEHLARVEAVTKEIETTGTYQLTGDELIFAAKQAWRNAPRCIGRIQWSNLQVFDARSCSTAQEMFEHICRHLRYATNNGNIRSAITVFPQRSDGKHDFRVWNAQLIRYAGYQMPDGTIIGDPASVEFTQLCIDLGWKPKYGRFDVVPLVLQADGRDPELFEIPPDLVLEVPMEHPKYEWFQELELKWYALPAVANMLLEVGGLEFPGCPFNGWYMGTEIGVRDFCDVQRYNILEEVGRRMGLETHKLASLWKDRAVVEINVAVLHSFQKQNVTIMDHHSAAESFMKYMQNEYRSRGGCPADWIWLVPPISGSITPVFHQEMLNYVLSPFYYYQVEAWKTHVWQDEKRRPRRKEIRFKVLVKAVLFAAVLMHKTMAARVRATILFATETGRSETLARDLGALFSCAFNPKVLCMDEYRLSRLEEEQLLLVVTSTFGNGGSPGNGEKLKKSLFMLKELTNKFRYAVFGLGSSMYPQFCAFAHDVDQKLSHLGASQLTPTGEGDELSGQEEAFRGWAVQTFKVACETFDVRGKHHIQIPKLYTSNVTWDPQLYRLVQDSEPLDLNKALSSMHAKYVFSMRLKSQQNLQSPQSSRTTLLVELCCEGSQGPSYLPGEHLGVFPANQPALVQGILERVVDGPAPHQPVRLETLSENGSYWVKDKRLPPCSLSQALTYFLDITTPPTQLLLRKLAQLATDEAERQRLETLCQPSDYNKWKFTNSPTFLEVLEEFPSLRVSASFLLSQLPILKPRYYSISSSRDRTPTEIHLTVAVLTYRTRDGQGPLHHGVCSTWLSSLKPQDLVPCFVRSASGFQLPEDPSRPCILIGPGTGIAPFRSFWQQRLHEAEHKGLQGGRMTLVFGCRRPDEDHLYQEEMLEMARKGVLHEVHTAYSRLPGQPKVYVQDLLRQRLAGEVLRVLHEEQGHLYVCGDVRMARDVACTLKQLVATALTLNEEQVEDYFFQLKSQKRYHEDIFGAVFPYEVKKEGAVGPPSDPRAPGAHGKS</sequence>
<proteinExistence type="evidence at transcript level"/>
<protein>
    <recommendedName>
        <fullName>Nitric oxide synthase, inducible</fullName>
        <ecNumber evidence="5">1.14.13.39</ecNumber>
    </recommendedName>
    <alternativeName>
        <fullName>Inducible NO synthase</fullName>
        <shortName>Inducible NOS</shortName>
        <shortName>iNOS</shortName>
    </alternativeName>
    <alternativeName>
        <fullName>NOS type II</fullName>
    </alternativeName>
    <alternativeName>
        <fullName>Peptidyl-cysteine S-nitrosylase NOS2</fullName>
    </alternativeName>
</protein>
<comment type="function">
    <text evidence="4 5">Produces nitric oxide (NO) which is a messenger molecule with diverse functions throughout the body. In macrophages, NO mediates tumoricidal and bactericidal actions. Also has nitrosylase activity and mediates cysteine S-nitrosylation of cytoplasmic target proteins such PTGS2/COX2. As component of the iNOS-S100A8/9 transnitrosylase complex involved in the selective inflammatory stimulus-dependent S-nitrosylation of GAPDH implicated in regulation of the GAIT complex activity and probably multiple targets including ANXA5, EZR, MSN and VIM. Involved in inflammation, enhances the synthesis of pro-inflammatory mediators such as IL6 and IL8.</text>
</comment>
<comment type="catalytic activity">
    <reaction evidence="5">
        <text>2 L-arginine + 3 NADPH + 4 O2 + H(+) = 2 L-citrulline + 2 nitric oxide + 3 NADP(+) + 4 H2O</text>
        <dbReference type="Rhea" id="RHEA:19897"/>
        <dbReference type="ChEBI" id="CHEBI:15377"/>
        <dbReference type="ChEBI" id="CHEBI:15378"/>
        <dbReference type="ChEBI" id="CHEBI:15379"/>
        <dbReference type="ChEBI" id="CHEBI:16480"/>
        <dbReference type="ChEBI" id="CHEBI:32682"/>
        <dbReference type="ChEBI" id="CHEBI:57743"/>
        <dbReference type="ChEBI" id="CHEBI:57783"/>
        <dbReference type="ChEBI" id="CHEBI:58349"/>
        <dbReference type="EC" id="1.14.13.39"/>
    </reaction>
    <physiologicalReaction direction="left-to-right" evidence="5">
        <dbReference type="Rhea" id="RHEA:19898"/>
    </physiologicalReaction>
</comment>
<comment type="cofactor">
    <cofactor evidence="5">
        <name>heme b</name>
        <dbReference type="ChEBI" id="CHEBI:60344"/>
    </cofactor>
</comment>
<comment type="cofactor">
    <cofactor evidence="3">
        <name>FAD</name>
        <dbReference type="ChEBI" id="CHEBI:57692"/>
    </cofactor>
    <text evidence="3">Binds 1 FAD.</text>
</comment>
<comment type="cofactor">
    <cofactor evidence="5">
        <name>FMN</name>
        <dbReference type="ChEBI" id="CHEBI:58210"/>
    </cofactor>
    <text evidence="5">Binds 1 FMN.</text>
</comment>
<comment type="cofactor">
    <cofactor evidence="5">
        <name>(6R)-L-erythro-5,6,7,8-tetrahydrobiopterin</name>
        <dbReference type="ChEBI" id="CHEBI:59560"/>
    </cofactor>
    <text evidence="5">Tetrahydrobiopterin (BH4). May stabilize the dimeric form of the enzyme.</text>
</comment>
<comment type="activity regulation">
    <text evidence="1">Not stimulated by calcium/calmodulin.</text>
</comment>
<comment type="subunit">
    <text evidence="4">Homodimer. Interacts with NHERF1. Interacts with GAPDH; induced by oxidatively-modified low-densitity lipoprotein (LDL(ox)). Interacts with S100A8 and S100A9 to form the iNOS-S100A8/9 transnitrosylase complex. Interacts with SPSB1, SPSB2 and SPSB4. Interacts with ELOC and CUL5 in the presence of SPSB1 or SPSB2 or SPSB4. Forms a complex with ASL, ASS1 and HSP90AA1; the complex regulates cell-autonomous L-arginine synthesis and citrulline recycling while channeling extracellular L-arginine to nitric oxide synthesis pathway.</text>
</comment>
<comment type="subcellular location">
    <subcellularLocation>
        <location evidence="5">Cytoplasm</location>
        <location evidence="5">Cytosol</location>
    </subcellularLocation>
    <text evidence="5">Localizes as discrete foci scattered throughout the cytosol and in the presence of SPSB1 and SPSB4, exhibits a more diffuse cytosolic localization.</text>
</comment>
<comment type="tissue specificity">
    <text>Detected in both stimulated and unstimulated immune cells and macrophages with little or no up-regulation following cellular stimulation with lipopolysaccharides (LPS) or concanavalin A (ConA).</text>
</comment>
<comment type="induction">
    <text>Little by LPS or ConA in spleen cells.</text>
</comment>
<comment type="PTM">
    <text evidence="5">Polyubiquitinated; mediated by SPSB1, SPSB2 and SPSB4, leading to proteasomal degradation.</text>
</comment>
<comment type="similarity">
    <text evidence="9">Belongs to the NOS family.</text>
</comment>
<organism>
    <name type="scientific">Sus scrofa</name>
    <name type="common">Pig</name>
    <dbReference type="NCBI Taxonomy" id="9823"/>
    <lineage>
        <taxon>Eukaryota</taxon>
        <taxon>Metazoa</taxon>
        <taxon>Chordata</taxon>
        <taxon>Craniata</taxon>
        <taxon>Vertebrata</taxon>
        <taxon>Euteleostomi</taxon>
        <taxon>Mammalia</taxon>
        <taxon>Eutheria</taxon>
        <taxon>Laurasiatheria</taxon>
        <taxon>Artiodactyla</taxon>
        <taxon>Suina</taxon>
        <taxon>Suidae</taxon>
        <taxon>Sus</taxon>
    </lineage>
</organism>
<name>NOS2_PIG</name>
<evidence type="ECO:0000250" key="1"/>
<evidence type="ECO:0000250" key="2">
    <source>
        <dbReference type="UniProtKB" id="P29474"/>
    </source>
</evidence>
<evidence type="ECO:0000250" key="3">
    <source>
        <dbReference type="UniProtKB" id="P29476"/>
    </source>
</evidence>
<evidence type="ECO:0000250" key="4">
    <source>
        <dbReference type="UniProtKB" id="P29477"/>
    </source>
</evidence>
<evidence type="ECO:0000250" key="5">
    <source>
        <dbReference type="UniProtKB" id="P35228"/>
    </source>
</evidence>
<evidence type="ECO:0000255" key="6">
    <source>
        <dbReference type="PROSITE-ProRule" id="PRU00088"/>
    </source>
</evidence>
<evidence type="ECO:0000255" key="7">
    <source>
        <dbReference type="PROSITE-ProRule" id="PRU00716"/>
    </source>
</evidence>
<evidence type="ECO:0000256" key="8">
    <source>
        <dbReference type="SAM" id="MobiDB-lite"/>
    </source>
</evidence>
<evidence type="ECO:0000305" key="9"/>